<name>CLPX_BORPE</name>
<dbReference type="EMBL" id="BX640416">
    <property type="protein sequence ID" value="CAE42063.1"/>
    <property type="molecule type" value="Genomic_DNA"/>
</dbReference>
<dbReference type="RefSeq" id="NP_880487.1">
    <property type="nucleotide sequence ID" value="NC_002929.2"/>
</dbReference>
<dbReference type="RefSeq" id="WP_010930556.1">
    <property type="nucleotide sequence ID" value="NZ_CP039022.1"/>
</dbReference>
<dbReference type="SMR" id="Q7VXI6"/>
<dbReference type="STRING" id="257313.BP1776"/>
<dbReference type="PaxDb" id="257313-BP1776"/>
<dbReference type="GeneID" id="69602046"/>
<dbReference type="KEGG" id="bpe:BP1776"/>
<dbReference type="PATRIC" id="fig|257313.5.peg.1906"/>
<dbReference type="eggNOG" id="COG1219">
    <property type="taxonomic scope" value="Bacteria"/>
</dbReference>
<dbReference type="HOGENOM" id="CLU_014218_8_2_4"/>
<dbReference type="Proteomes" id="UP000002676">
    <property type="component" value="Chromosome"/>
</dbReference>
<dbReference type="GO" id="GO:0009376">
    <property type="term" value="C:HslUV protease complex"/>
    <property type="evidence" value="ECO:0007669"/>
    <property type="project" value="TreeGrafter"/>
</dbReference>
<dbReference type="GO" id="GO:0005524">
    <property type="term" value="F:ATP binding"/>
    <property type="evidence" value="ECO:0007669"/>
    <property type="project" value="UniProtKB-UniRule"/>
</dbReference>
<dbReference type="GO" id="GO:0016887">
    <property type="term" value="F:ATP hydrolysis activity"/>
    <property type="evidence" value="ECO:0007669"/>
    <property type="project" value="InterPro"/>
</dbReference>
<dbReference type="GO" id="GO:0140662">
    <property type="term" value="F:ATP-dependent protein folding chaperone"/>
    <property type="evidence" value="ECO:0007669"/>
    <property type="project" value="InterPro"/>
</dbReference>
<dbReference type="GO" id="GO:0046983">
    <property type="term" value="F:protein dimerization activity"/>
    <property type="evidence" value="ECO:0007669"/>
    <property type="project" value="InterPro"/>
</dbReference>
<dbReference type="GO" id="GO:0051082">
    <property type="term" value="F:unfolded protein binding"/>
    <property type="evidence" value="ECO:0007669"/>
    <property type="project" value="UniProtKB-UniRule"/>
</dbReference>
<dbReference type="GO" id="GO:0008270">
    <property type="term" value="F:zinc ion binding"/>
    <property type="evidence" value="ECO:0007669"/>
    <property type="project" value="InterPro"/>
</dbReference>
<dbReference type="GO" id="GO:0051301">
    <property type="term" value="P:cell division"/>
    <property type="evidence" value="ECO:0007669"/>
    <property type="project" value="TreeGrafter"/>
</dbReference>
<dbReference type="GO" id="GO:0051603">
    <property type="term" value="P:proteolysis involved in protein catabolic process"/>
    <property type="evidence" value="ECO:0007669"/>
    <property type="project" value="TreeGrafter"/>
</dbReference>
<dbReference type="CDD" id="cd19497">
    <property type="entry name" value="RecA-like_ClpX"/>
    <property type="match status" value="1"/>
</dbReference>
<dbReference type="FunFam" id="1.10.8.60:FF:000002">
    <property type="entry name" value="ATP-dependent Clp protease ATP-binding subunit ClpX"/>
    <property type="match status" value="1"/>
</dbReference>
<dbReference type="FunFam" id="3.40.50.300:FF:000005">
    <property type="entry name" value="ATP-dependent Clp protease ATP-binding subunit ClpX"/>
    <property type="match status" value="1"/>
</dbReference>
<dbReference type="Gene3D" id="1.10.8.60">
    <property type="match status" value="1"/>
</dbReference>
<dbReference type="Gene3D" id="6.20.220.10">
    <property type="entry name" value="ClpX chaperone, C4-type zinc finger domain"/>
    <property type="match status" value="1"/>
</dbReference>
<dbReference type="Gene3D" id="3.40.50.300">
    <property type="entry name" value="P-loop containing nucleotide triphosphate hydrolases"/>
    <property type="match status" value="1"/>
</dbReference>
<dbReference type="HAMAP" id="MF_00175">
    <property type="entry name" value="ClpX"/>
    <property type="match status" value="1"/>
</dbReference>
<dbReference type="InterPro" id="IPR003593">
    <property type="entry name" value="AAA+_ATPase"/>
</dbReference>
<dbReference type="InterPro" id="IPR050052">
    <property type="entry name" value="ATP-dep_Clp_protease_ClpX"/>
</dbReference>
<dbReference type="InterPro" id="IPR003959">
    <property type="entry name" value="ATPase_AAA_core"/>
</dbReference>
<dbReference type="InterPro" id="IPR019489">
    <property type="entry name" value="Clp_ATPase_C"/>
</dbReference>
<dbReference type="InterPro" id="IPR004487">
    <property type="entry name" value="Clp_protease_ATP-bd_su_ClpX"/>
</dbReference>
<dbReference type="InterPro" id="IPR046425">
    <property type="entry name" value="ClpX_bact"/>
</dbReference>
<dbReference type="InterPro" id="IPR027417">
    <property type="entry name" value="P-loop_NTPase"/>
</dbReference>
<dbReference type="InterPro" id="IPR010603">
    <property type="entry name" value="Znf_CppX_C4"/>
</dbReference>
<dbReference type="InterPro" id="IPR038366">
    <property type="entry name" value="Znf_CppX_C4_sf"/>
</dbReference>
<dbReference type="NCBIfam" id="TIGR00382">
    <property type="entry name" value="clpX"/>
    <property type="match status" value="1"/>
</dbReference>
<dbReference type="NCBIfam" id="NF003745">
    <property type="entry name" value="PRK05342.1"/>
    <property type="match status" value="1"/>
</dbReference>
<dbReference type="PANTHER" id="PTHR48102:SF7">
    <property type="entry name" value="ATP-DEPENDENT CLP PROTEASE ATP-BINDING SUBUNIT CLPX-LIKE, MITOCHONDRIAL"/>
    <property type="match status" value="1"/>
</dbReference>
<dbReference type="PANTHER" id="PTHR48102">
    <property type="entry name" value="ATP-DEPENDENT CLP PROTEASE ATP-BINDING SUBUNIT CLPX-LIKE, MITOCHONDRIAL-RELATED"/>
    <property type="match status" value="1"/>
</dbReference>
<dbReference type="Pfam" id="PF07724">
    <property type="entry name" value="AAA_2"/>
    <property type="match status" value="1"/>
</dbReference>
<dbReference type="Pfam" id="PF10431">
    <property type="entry name" value="ClpB_D2-small"/>
    <property type="match status" value="1"/>
</dbReference>
<dbReference type="Pfam" id="PF06689">
    <property type="entry name" value="zf-C4_ClpX"/>
    <property type="match status" value="1"/>
</dbReference>
<dbReference type="SMART" id="SM00382">
    <property type="entry name" value="AAA"/>
    <property type="match status" value="1"/>
</dbReference>
<dbReference type="SMART" id="SM01086">
    <property type="entry name" value="ClpB_D2-small"/>
    <property type="match status" value="1"/>
</dbReference>
<dbReference type="SMART" id="SM00994">
    <property type="entry name" value="zf-C4_ClpX"/>
    <property type="match status" value="1"/>
</dbReference>
<dbReference type="SUPFAM" id="SSF57716">
    <property type="entry name" value="Glucocorticoid receptor-like (DNA-binding domain)"/>
    <property type="match status" value="1"/>
</dbReference>
<dbReference type="SUPFAM" id="SSF52540">
    <property type="entry name" value="P-loop containing nucleoside triphosphate hydrolases"/>
    <property type="match status" value="1"/>
</dbReference>
<dbReference type="PROSITE" id="PS51902">
    <property type="entry name" value="CLPX_ZB"/>
    <property type="match status" value="1"/>
</dbReference>
<accession>Q7VXI6</accession>
<evidence type="ECO:0000255" key="1">
    <source>
        <dbReference type="HAMAP-Rule" id="MF_00175"/>
    </source>
</evidence>
<evidence type="ECO:0000255" key="2">
    <source>
        <dbReference type="PROSITE-ProRule" id="PRU01250"/>
    </source>
</evidence>
<keyword id="KW-0067">ATP-binding</keyword>
<keyword id="KW-0143">Chaperone</keyword>
<keyword id="KW-0479">Metal-binding</keyword>
<keyword id="KW-0547">Nucleotide-binding</keyword>
<keyword id="KW-1185">Reference proteome</keyword>
<keyword id="KW-0862">Zinc</keyword>
<gene>
    <name evidence="1" type="primary">clpX</name>
    <name type="ordered locus">BP1776</name>
</gene>
<sequence>MPEKKGSADAKVLHCSFCNKSQHEVRKLIAGPSVFICDECIDLCNDIIREEAQATARAAIRSELPTPAEIKTFLDQYVIGQTSPKRMLAVAVYNHYKRIRHGEIKGDEVELSKSNIMLIGPTGSGKTLLAQTLARMLNVPFVMADATTLTEAGYVGEDVENIIQKLLQNCNYDVEKAQRAIIYIDEIDKISRKSDNPSITRDVSGEGVQQALLKLIEGTVASVPPQGGRKHPNQDFVQVDTTNILFIVGGAFDGLEKVIRDRTEKSGIGFSAAVRAKSERGVGELFSEAEPEDLIKFGLIPELVGRLPVVATLDELDEAVLVQILTEPKNALVKQFQKLFAMEGAELDVRPDALKAISRKALKRKTGARGLRSILEGALLDTMYDLPSQGNVSRVVLEANAVEGVGKPLLIYADESEAASGEKAGRGEVRDAAA</sequence>
<comment type="function">
    <text evidence="1">ATP-dependent specificity component of the Clp protease. It directs the protease to specific substrates. Can perform chaperone functions in the absence of ClpP.</text>
</comment>
<comment type="subunit">
    <text evidence="1">Component of the ClpX-ClpP complex. Forms a hexameric ring that, in the presence of ATP, binds to fourteen ClpP subunits assembled into a disk-like structure with a central cavity, resembling the structure of eukaryotic proteasomes.</text>
</comment>
<comment type="similarity">
    <text evidence="1">Belongs to the ClpX chaperone family.</text>
</comment>
<feature type="chain" id="PRO_0000160323" description="ATP-dependent Clp protease ATP-binding subunit ClpX">
    <location>
        <begin position="1"/>
        <end position="434"/>
    </location>
</feature>
<feature type="domain" description="ClpX-type ZB" evidence="2">
    <location>
        <begin position="3"/>
        <end position="56"/>
    </location>
</feature>
<feature type="binding site" evidence="2">
    <location>
        <position position="15"/>
    </location>
    <ligand>
        <name>Zn(2+)</name>
        <dbReference type="ChEBI" id="CHEBI:29105"/>
    </ligand>
</feature>
<feature type="binding site" evidence="2">
    <location>
        <position position="18"/>
    </location>
    <ligand>
        <name>Zn(2+)</name>
        <dbReference type="ChEBI" id="CHEBI:29105"/>
    </ligand>
</feature>
<feature type="binding site" evidence="2">
    <location>
        <position position="37"/>
    </location>
    <ligand>
        <name>Zn(2+)</name>
        <dbReference type="ChEBI" id="CHEBI:29105"/>
    </ligand>
</feature>
<feature type="binding site" evidence="2">
    <location>
        <position position="40"/>
    </location>
    <ligand>
        <name>Zn(2+)</name>
        <dbReference type="ChEBI" id="CHEBI:29105"/>
    </ligand>
</feature>
<feature type="binding site" evidence="1">
    <location>
        <begin position="121"/>
        <end position="128"/>
    </location>
    <ligand>
        <name>ATP</name>
        <dbReference type="ChEBI" id="CHEBI:30616"/>
    </ligand>
</feature>
<reference key="1">
    <citation type="journal article" date="2003" name="Nat. Genet.">
        <title>Comparative analysis of the genome sequences of Bordetella pertussis, Bordetella parapertussis and Bordetella bronchiseptica.</title>
        <authorList>
            <person name="Parkhill J."/>
            <person name="Sebaihia M."/>
            <person name="Preston A."/>
            <person name="Murphy L.D."/>
            <person name="Thomson N.R."/>
            <person name="Harris D.E."/>
            <person name="Holden M.T.G."/>
            <person name="Churcher C.M."/>
            <person name="Bentley S.D."/>
            <person name="Mungall K.L."/>
            <person name="Cerdeno-Tarraga A.-M."/>
            <person name="Temple L."/>
            <person name="James K.D."/>
            <person name="Harris B."/>
            <person name="Quail M.A."/>
            <person name="Achtman M."/>
            <person name="Atkin R."/>
            <person name="Baker S."/>
            <person name="Basham D."/>
            <person name="Bason N."/>
            <person name="Cherevach I."/>
            <person name="Chillingworth T."/>
            <person name="Collins M."/>
            <person name="Cronin A."/>
            <person name="Davis P."/>
            <person name="Doggett J."/>
            <person name="Feltwell T."/>
            <person name="Goble A."/>
            <person name="Hamlin N."/>
            <person name="Hauser H."/>
            <person name="Holroyd S."/>
            <person name="Jagels K."/>
            <person name="Leather S."/>
            <person name="Moule S."/>
            <person name="Norberczak H."/>
            <person name="O'Neil S."/>
            <person name="Ormond D."/>
            <person name="Price C."/>
            <person name="Rabbinowitsch E."/>
            <person name="Rutter S."/>
            <person name="Sanders M."/>
            <person name="Saunders D."/>
            <person name="Seeger K."/>
            <person name="Sharp S."/>
            <person name="Simmonds M."/>
            <person name="Skelton J."/>
            <person name="Squares R."/>
            <person name="Squares S."/>
            <person name="Stevens K."/>
            <person name="Unwin L."/>
            <person name="Whitehead S."/>
            <person name="Barrell B.G."/>
            <person name="Maskell D.J."/>
        </authorList>
    </citation>
    <scope>NUCLEOTIDE SEQUENCE [LARGE SCALE GENOMIC DNA]</scope>
    <source>
        <strain>Tohama I / ATCC BAA-589 / NCTC 13251</strain>
    </source>
</reference>
<protein>
    <recommendedName>
        <fullName evidence="1">ATP-dependent Clp protease ATP-binding subunit ClpX</fullName>
    </recommendedName>
</protein>
<proteinExistence type="inferred from homology"/>
<organism>
    <name type="scientific">Bordetella pertussis (strain Tohama I / ATCC BAA-589 / NCTC 13251)</name>
    <dbReference type="NCBI Taxonomy" id="257313"/>
    <lineage>
        <taxon>Bacteria</taxon>
        <taxon>Pseudomonadati</taxon>
        <taxon>Pseudomonadota</taxon>
        <taxon>Betaproteobacteria</taxon>
        <taxon>Burkholderiales</taxon>
        <taxon>Alcaligenaceae</taxon>
        <taxon>Bordetella</taxon>
    </lineage>
</organism>